<name>RRT5_DEBHA</name>
<accession>Q6BW07</accession>
<feature type="chain" id="PRO_0000404357" description="Regulator of rDNA transcription protein 5">
    <location>
        <begin position="1"/>
        <end position="355"/>
    </location>
</feature>
<feature type="domain" description="RRM 1" evidence="2">
    <location>
        <begin position="21"/>
        <end position="88"/>
    </location>
</feature>
<feature type="domain" description="RRM 2" evidence="2">
    <location>
        <begin position="170"/>
        <end position="256"/>
    </location>
</feature>
<feature type="region of interest" description="Disordered" evidence="3">
    <location>
        <begin position="272"/>
        <end position="299"/>
    </location>
</feature>
<feature type="region of interest" description="Disordered" evidence="3">
    <location>
        <begin position="314"/>
        <end position="355"/>
    </location>
</feature>
<feature type="compositionally biased region" description="Polar residues" evidence="3">
    <location>
        <begin position="289"/>
        <end position="299"/>
    </location>
</feature>
<feature type="compositionally biased region" description="Basic and acidic residues" evidence="3">
    <location>
        <begin position="314"/>
        <end position="324"/>
    </location>
</feature>
<feature type="compositionally biased region" description="Acidic residues" evidence="3">
    <location>
        <begin position="330"/>
        <end position="341"/>
    </location>
</feature>
<comment type="function">
    <text evidence="1">May be involved in the modulation of rDNA transcription.</text>
</comment>
<comment type="similarity">
    <text evidence="4">Belongs to the RRT5 family.</text>
</comment>
<organism>
    <name type="scientific">Debaryomyces hansenii (strain ATCC 36239 / CBS 767 / BCRC 21394 / JCM 1990 / NBRC 0083 / IGC 2968)</name>
    <name type="common">Yeast</name>
    <name type="synonym">Torulaspora hansenii</name>
    <dbReference type="NCBI Taxonomy" id="284592"/>
    <lineage>
        <taxon>Eukaryota</taxon>
        <taxon>Fungi</taxon>
        <taxon>Dikarya</taxon>
        <taxon>Ascomycota</taxon>
        <taxon>Saccharomycotina</taxon>
        <taxon>Pichiomycetes</taxon>
        <taxon>Debaryomycetaceae</taxon>
        <taxon>Debaryomyces</taxon>
    </lineage>
</organism>
<proteinExistence type="inferred from homology"/>
<evidence type="ECO:0000250" key="1"/>
<evidence type="ECO:0000255" key="2">
    <source>
        <dbReference type="PROSITE-ProRule" id="PRU00176"/>
    </source>
</evidence>
<evidence type="ECO:0000256" key="3">
    <source>
        <dbReference type="SAM" id="MobiDB-lite"/>
    </source>
</evidence>
<evidence type="ECO:0000305" key="4"/>
<gene>
    <name type="primary">RRT5</name>
    <name type="ordered locus">DEHA2B15246g</name>
</gene>
<sequence>MSLVIPESPMFEVANNGKKSSRVYIKNLHFNTSEEELEVFLKKYEPRHRPFGIAYAEFSSVEQASKVVKDLNGALFKDRQIFVKLHVPFSPTGKPIFGRRKTSSGAEKLGDASNKVNLSAKTDKPLSSDTKDFDGVASTVPRSINIEDIPFTDEPKKVQDEDVQKKLSNDTIFIGNAVDKTVDKDVREFFKDYYPTQVFIFRGANQKRMQRTISLRQKTVSVLVTLKKEEDLSKAISELNSKKLNGRAVYLKAAHLSKIEEVVNAAKITAVPSKSPPTTATADDEAQEQKGNTTAETSTLLEMFKDTQKKIQGKYKETIEKQIRPSDTPLGEEEEEEEEGDETKQGVPNEEMIVA</sequence>
<dbReference type="EMBL" id="CR382134">
    <property type="protein sequence ID" value="CAG85623.2"/>
    <property type="molecule type" value="Genomic_DNA"/>
</dbReference>
<dbReference type="RefSeq" id="XP_457612.2">
    <property type="nucleotide sequence ID" value="XM_457612.1"/>
</dbReference>
<dbReference type="FunCoup" id="Q6BW07">
    <property type="interactions" value="183"/>
</dbReference>
<dbReference type="STRING" id="284592.Q6BW07"/>
<dbReference type="GeneID" id="2913584"/>
<dbReference type="KEGG" id="dha:DEHA2B15246g"/>
<dbReference type="VEuPathDB" id="FungiDB:DEHA2B15246g"/>
<dbReference type="eggNOG" id="ENOG502RZDM">
    <property type="taxonomic scope" value="Eukaryota"/>
</dbReference>
<dbReference type="HOGENOM" id="CLU_042558_0_0_1"/>
<dbReference type="InParanoid" id="Q6BW07"/>
<dbReference type="OMA" id="IWIFRTR"/>
<dbReference type="OrthoDB" id="439808at2759"/>
<dbReference type="Proteomes" id="UP000000599">
    <property type="component" value="Chromosome B"/>
</dbReference>
<dbReference type="GO" id="GO:0005737">
    <property type="term" value="C:cytoplasm"/>
    <property type="evidence" value="ECO:0007669"/>
    <property type="project" value="TreeGrafter"/>
</dbReference>
<dbReference type="GO" id="GO:0005634">
    <property type="term" value="C:nucleus"/>
    <property type="evidence" value="ECO:0007669"/>
    <property type="project" value="TreeGrafter"/>
</dbReference>
<dbReference type="GO" id="GO:1990904">
    <property type="term" value="C:ribonucleoprotein complex"/>
    <property type="evidence" value="ECO:0007669"/>
    <property type="project" value="TreeGrafter"/>
</dbReference>
<dbReference type="GO" id="GO:0003729">
    <property type="term" value="F:mRNA binding"/>
    <property type="evidence" value="ECO:0007669"/>
    <property type="project" value="TreeGrafter"/>
</dbReference>
<dbReference type="CDD" id="cd12409">
    <property type="entry name" value="RRM1_RRT5"/>
    <property type="match status" value="1"/>
</dbReference>
<dbReference type="CDD" id="cd12410">
    <property type="entry name" value="RRM2_RRT5"/>
    <property type="match status" value="1"/>
</dbReference>
<dbReference type="Gene3D" id="3.30.70.330">
    <property type="match status" value="2"/>
</dbReference>
<dbReference type="InterPro" id="IPR012677">
    <property type="entry name" value="Nucleotide-bd_a/b_plait_sf"/>
</dbReference>
<dbReference type="InterPro" id="IPR035979">
    <property type="entry name" value="RBD_domain_sf"/>
</dbReference>
<dbReference type="InterPro" id="IPR000504">
    <property type="entry name" value="RRM_dom"/>
</dbReference>
<dbReference type="InterPro" id="IPR034244">
    <property type="entry name" value="Rrt5_RRM1"/>
</dbReference>
<dbReference type="InterPro" id="IPR034247">
    <property type="entry name" value="Rrt5_RRM2"/>
</dbReference>
<dbReference type="InterPro" id="IPR050374">
    <property type="entry name" value="RRT5_SRSF_SR"/>
</dbReference>
<dbReference type="PANTHER" id="PTHR23003:SF54">
    <property type="entry name" value="REGULATOR OF RDNA TRANSCRIPTION PROTEIN 5"/>
    <property type="match status" value="1"/>
</dbReference>
<dbReference type="PANTHER" id="PTHR23003">
    <property type="entry name" value="RNA RECOGNITION MOTIF RRM DOMAIN CONTAINING PROTEIN"/>
    <property type="match status" value="1"/>
</dbReference>
<dbReference type="Pfam" id="PF00076">
    <property type="entry name" value="RRM_1"/>
    <property type="match status" value="1"/>
</dbReference>
<dbReference type="SMART" id="SM00360">
    <property type="entry name" value="RRM"/>
    <property type="match status" value="2"/>
</dbReference>
<dbReference type="SUPFAM" id="SSF54928">
    <property type="entry name" value="RNA-binding domain, RBD"/>
    <property type="match status" value="1"/>
</dbReference>
<dbReference type="PROSITE" id="PS50102">
    <property type="entry name" value="RRM"/>
    <property type="match status" value="2"/>
</dbReference>
<protein>
    <recommendedName>
        <fullName>Regulator of rDNA transcription protein 5</fullName>
    </recommendedName>
</protein>
<keyword id="KW-1185">Reference proteome</keyword>
<keyword id="KW-0677">Repeat</keyword>
<keyword id="KW-0694">RNA-binding</keyword>
<keyword id="KW-0804">Transcription</keyword>
<keyword id="KW-0805">Transcription regulation</keyword>
<reference key="1">
    <citation type="journal article" date="2004" name="Nature">
        <title>Genome evolution in yeasts.</title>
        <authorList>
            <person name="Dujon B."/>
            <person name="Sherman D."/>
            <person name="Fischer G."/>
            <person name="Durrens P."/>
            <person name="Casaregola S."/>
            <person name="Lafontaine I."/>
            <person name="de Montigny J."/>
            <person name="Marck C."/>
            <person name="Neuveglise C."/>
            <person name="Talla E."/>
            <person name="Goffard N."/>
            <person name="Frangeul L."/>
            <person name="Aigle M."/>
            <person name="Anthouard V."/>
            <person name="Babour A."/>
            <person name="Barbe V."/>
            <person name="Barnay S."/>
            <person name="Blanchin S."/>
            <person name="Beckerich J.-M."/>
            <person name="Beyne E."/>
            <person name="Bleykasten C."/>
            <person name="Boisrame A."/>
            <person name="Boyer J."/>
            <person name="Cattolico L."/>
            <person name="Confanioleri F."/>
            <person name="de Daruvar A."/>
            <person name="Despons L."/>
            <person name="Fabre E."/>
            <person name="Fairhead C."/>
            <person name="Ferry-Dumazet H."/>
            <person name="Groppi A."/>
            <person name="Hantraye F."/>
            <person name="Hennequin C."/>
            <person name="Jauniaux N."/>
            <person name="Joyet P."/>
            <person name="Kachouri R."/>
            <person name="Kerrest A."/>
            <person name="Koszul R."/>
            <person name="Lemaire M."/>
            <person name="Lesur I."/>
            <person name="Ma L."/>
            <person name="Muller H."/>
            <person name="Nicaud J.-M."/>
            <person name="Nikolski M."/>
            <person name="Oztas S."/>
            <person name="Ozier-Kalogeropoulos O."/>
            <person name="Pellenz S."/>
            <person name="Potier S."/>
            <person name="Richard G.-F."/>
            <person name="Straub M.-L."/>
            <person name="Suleau A."/>
            <person name="Swennen D."/>
            <person name="Tekaia F."/>
            <person name="Wesolowski-Louvel M."/>
            <person name="Westhof E."/>
            <person name="Wirth B."/>
            <person name="Zeniou-Meyer M."/>
            <person name="Zivanovic Y."/>
            <person name="Bolotin-Fukuhara M."/>
            <person name="Thierry A."/>
            <person name="Bouchier C."/>
            <person name="Caudron B."/>
            <person name="Scarpelli C."/>
            <person name="Gaillardin C."/>
            <person name="Weissenbach J."/>
            <person name="Wincker P."/>
            <person name="Souciet J.-L."/>
        </authorList>
    </citation>
    <scope>NUCLEOTIDE SEQUENCE [LARGE SCALE GENOMIC DNA]</scope>
    <source>
        <strain>ATCC 36239 / CBS 767 / BCRC 21394 / JCM 1990 / NBRC 0083 / IGC 2968</strain>
    </source>
</reference>